<feature type="chain" id="PRO_0000269721" description="Suppressor of SWI4 1 homolog">
    <location>
        <begin position="1"/>
        <end position="473"/>
    </location>
</feature>
<feature type="domain" description="Brix" evidence="3">
    <location>
        <begin position="29"/>
        <end position="292"/>
    </location>
</feature>
<feature type="region of interest" description="Disordered" evidence="4">
    <location>
        <begin position="323"/>
        <end position="473"/>
    </location>
</feature>
<feature type="compositionally biased region" description="Low complexity" evidence="4">
    <location>
        <begin position="324"/>
        <end position="334"/>
    </location>
</feature>
<feature type="compositionally biased region" description="Basic and acidic residues" evidence="4">
    <location>
        <begin position="335"/>
        <end position="360"/>
    </location>
</feature>
<feature type="compositionally biased region" description="Acidic residues" evidence="4">
    <location>
        <begin position="376"/>
        <end position="388"/>
    </location>
</feature>
<feature type="compositionally biased region" description="Basic residues" evidence="4">
    <location>
        <begin position="407"/>
        <end position="421"/>
    </location>
</feature>
<feature type="compositionally biased region" description="Basic and acidic residues" evidence="4">
    <location>
        <begin position="422"/>
        <end position="444"/>
    </location>
</feature>
<feature type="compositionally biased region" description="Basic residues" evidence="4">
    <location>
        <begin position="464"/>
        <end position="473"/>
    </location>
</feature>
<feature type="modified residue" description="Phosphoserine" evidence="2">
    <location>
        <position position="238"/>
    </location>
</feature>
<feature type="modified residue" description="Phosphoserine" evidence="2">
    <location>
        <position position="240"/>
    </location>
</feature>
<feature type="modified residue" description="N6-acetyllysine" evidence="2">
    <location>
        <position position="438"/>
    </location>
</feature>
<keyword id="KW-0007">Acetylation</keyword>
<keyword id="KW-0539">Nucleus</keyword>
<keyword id="KW-0597">Phosphoprotein</keyword>
<keyword id="KW-1185">Reference proteome</keyword>
<protein>
    <recommendedName>
        <fullName>Suppressor of SWI4 1 homolog</fullName>
        <shortName>Ssf-1</shortName>
    </recommendedName>
    <alternativeName>
        <fullName>Peter Pan homolog</fullName>
    </alternativeName>
</protein>
<organism>
    <name type="scientific">Pongo abelii</name>
    <name type="common">Sumatran orangutan</name>
    <name type="synonym">Pongo pygmaeus abelii</name>
    <dbReference type="NCBI Taxonomy" id="9601"/>
    <lineage>
        <taxon>Eukaryota</taxon>
        <taxon>Metazoa</taxon>
        <taxon>Chordata</taxon>
        <taxon>Craniata</taxon>
        <taxon>Vertebrata</taxon>
        <taxon>Euteleostomi</taxon>
        <taxon>Mammalia</taxon>
        <taxon>Eutheria</taxon>
        <taxon>Euarchontoglires</taxon>
        <taxon>Primates</taxon>
        <taxon>Haplorrhini</taxon>
        <taxon>Catarrhini</taxon>
        <taxon>Hominidae</taxon>
        <taxon>Pongo</taxon>
    </lineage>
</organism>
<name>SSF1_PONAB</name>
<proteinExistence type="evidence at transcript level"/>
<sequence length="473" mass="53339">MGQSGRSRHQKRARAQAQLRNLEAYAANPHSFVFTRGCTGRNIRQLSLDVRRVMEPLTASRLQVRKKNSLKDCVAVAGPLGVTHFLILSKTETNIYFKLMHLPGGPTLTFQVKKYSLVRDVVSSLRRHRMHEQQFAYPPLLVLNSFGPHGMHVKLMATMFQNLFPSINVHKVNLNTIKRCLLIDYNHDSQELDFRHYSIKVVPVGASRGMKKLLQEKFPNMSRLQDISELLATGAGLSESEAEPDGDHNITELPQAVAGRGNMRAQQSAVRLTEIGPRMTLQLIKVQEGVGEGKVMFHSFVRKTEEELQAILEAKEKKLRLKAQRQAQQAQNVQRKQEQREAHRKKSLEGMKKARVRGGDEEASGIPSRTASLGLGEDDDEQEDDDIEYFCQAVGEAPSEDLFPEAKRKRLAKSPGQKRKRREMDRGRGRLCDQKFPKPKDKSHGAQARRGPRGASQDGGRGQGRGRPRKRVA</sequence>
<evidence type="ECO:0000250" key="1"/>
<evidence type="ECO:0000250" key="2">
    <source>
        <dbReference type="UniProtKB" id="Q91YU8"/>
    </source>
</evidence>
<evidence type="ECO:0000255" key="3">
    <source>
        <dbReference type="PROSITE-ProRule" id="PRU00034"/>
    </source>
</evidence>
<evidence type="ECO:0000256" key="4">
    <source>
        <dbReference type="SAM" id="MobiDB-lite"/>
    </source>
</evidence>
<reference key="1">
    <citation type="submission" date="2004-11" db="EMBL/GenBank/DDBJ databases">
        <authorList>
            <consortium name="The German cDNA consortium"/>
        </authorList>
    </citation>
    <scope>NUCLEOTIDE SEQUENCE [LARGE SCALE MRNA]</scope>
    <source>
        <tissue>Heart</tissue>
    </source>
</reference>
<dbReference type="EMBL" id="CR857500">
    <property type="protein sequence ID" value="CAH89784.1"/>
    <property type="molecule type" value="mRNA"/>
</dbReference>
<dbReference type="RefSeq" id="NP_001124818.1">
    <property type="nucleotide sequence ID" value="NM_001131346.1"/>
</dbReference>
<dbReference type="SMR" id="Q5REM3"/>
<dbReference type="FunCoup" id="Q5REM3">
    <property type="interactions" value="2505"/>
</dbReference>
<dbReference type="STRING" id="9601.ENSPPYP00000010703"/>
<dbReference type="GeneID" id="100171676"/>
<dbReference type="KEGG" id="pon:100171676"/>
<dbReference type="CTD" id="5032"/>
<dbReference type="eggNOG" id="KOG2963">
    <property type="taxonomic scope" value="Eukaryota"/>
</dbReference>
<dbReference type="InParanoid" id="Q5REM3"/>
<dbReference type="OrthoDB" id="10261452at2759"/>
<dbReference type="Proteomes" id="UP000001595">
    <property type="component" value="Unplaced"/>
</dbReference>
<dbReference type="GO" id="GO:0005730">
    <property type="term" value="C:nucleolus"/>
    <property type="evidence" value="ECO:0007669"/>
    <property type="project" value="UniProtKB-SubCell"/>
</dbReference>
<dbReference type="GO" id="GO:0030687">
    <property type="term" value="C:preribosome, large subunit precursor"/>
    <property type="evidence" value="ECO:0007669"/>
    <property type="project" value="TreeGrafter"/>
</dbReference>
<dbReference type="GO" id="GO:0019843">
    <property type="term" value="F:rRNA binding"/>
    <property type="evidence" value="ECO:0007669"/>
    <property type="project" value="InterPro"/>
</dbReference>
<dbReference type="GO" id="GO:0000027">
    <property type="term" value="P:ribosomal large subunit assembly"/>
    <property type="evidence" value="ECO:0007669"/>
    <property type="project" value="TreeGrafter"/>
</dbReference>
<dbReference type="GO" id="GO:0006364">
    <property type="term" value="P:rRNA processing"/>
    <property type="evidence" value="ECO:0007669"/>
    <property type="project" value="InterPro"/>
</dbReference>
<dbReference type="InterPro" id="IPR007109">
    <property type="entry name" value="Brix"/>
</dbReference>
<dbReference type="InterPro" id="IPR045112">
    <property type="entry name" value="PPAN-like"/>
</dbReference>
<dbReference type="PANTHER" id="PTHR12661">
    <property type="entry name" value="PETER PAN-RELATED"/>
    <property type="match status" value="1"/>
</dbReference>
<dbReference type="PANTHER" id="PTHR12661:SF5">
    <property type="entry name" value="SUPPRESSOR OF SWI4 1 HOMOLOG"/>
    <property type="match status" value="1"/>
</dbReference>
<dbReference type="Pfam" id="PF04427">
    <property type="entry name" value="Brix"/>
    <property type="match status" value="1"/>
</dbReference>
<dbReference type="SMART" id="SM00879">
    <property type="entry name" value="Brix"/>
    <property type="match status" value="1"/>
</dbReference>
<dbReference type="PROSITE" id="PS50833">
    <property type="entry name" value="BRIX"/>
    <property type="match status" value="1"/>
</dbReference>
<comment type="function">
    <text evidence="1">May have a role in cell growth.</text>
</comment>
<comment type="subcellular location">
    <subcellularLocation>
        <location evidence="1">Nucleus</location>
        <location evidence="1">Nucleolus</location>
    </subcellularLocation>
</comment>
<gene>
    <name type="primary">PPAN</name>
    <name type="synonym">SSF1</name>
</gene>
<accession>Q5REM3</accession>